<proteinExistence type="inferred from homology"/>
<evidence type="ECO:0000250" key="1">
    <source>
        <dbReference type="UniProtKB" id="Q9KNM4"/>
    </source>
</evidence>
<evidence type="ECO:0000255" key="2">
    <source>
        <dbReference type="HAMAP-Rule" id="MF_00328"/>
    </source>
</evidence>
<name>KGUA_SYNS3</name>
<feature type="chain" id="PRO_0000266420" description="Guanylate kinase">
    <location>
        <begin position="1"/>
        <end position="190"/>
    </location>
</feature>
<feature type="domain" description="Guanylate kinase-like" evidence="2">
    <location>
        <begin position="8"/>
        <end position="186"/>
    </location>
</feature>
<feature type="binding site" evidence="2">
    <location>
        <begin position="15"/>
        <end position="22"/>
    </location>
    <ligand>
        <name>ATP</name>
        <dbReference type="ChEBI" id="CHEBI:30616"/>
    </ligand>
</feature>
<reference key="1">
    <citation type="journal article" date="2006" name="Proc. Natl. Acad. Sci. U.S.A.">
        <title>Genome sequence of Synechococcus CC9311: insights into adaptation to a coastal environment.</title>
        <authorList>
            <person name="Palenik B."/>
            <person name="Ren Q."/>
            <person name="Dupont C.L."/>
            <person name="Myers G.S."/>
            <person name="Heidelberg J.F."/>
            <person name="Badger J.H."/>
            <person name="Madupu R."/>
            <person name="Nelson W.C."/>
            <person name="Brinkac L.M."/>
            <person name="Dodson R.J."/>
            <person name="Durkin A.S."/>
            <person name="Daugherty S.C."/>
            <person name="Sullivan S.A."/>
            <person name="Khouri H."/>
            <person name="Mohamoud Y."/>
            <person name="Halpin R."/>
            <person name="Paulsen I.T."/>
        </authorList>
    </citation>
    <scope>NUCLEOTIDE SEQUENCE [LARGE SCALE GENOMIC DNA]</scope>
    <source>
        <strain>CC9311</strain>
    </source>
</reference>
<keyword id="KW-0067">ATP-binding</keyword>
<keyword id="KW-0963">Cytoplasm</keyword>
<keyword id="KW-0418">Kinase</keyword>
<keyword id="KW-0547">Nucleotide-binding</keyword>
<keyword id="KW-1185">Reference proteome</keyword>
<keyword id="KW-0808">Transferase</keyword>
<organism>
    <name type="scientific">Synechococcus sp. (strain CC9311)</name>
    <dbReference type="NCBI Taxonomy" id="64471"/>
    <lineage>
        <taxon>Bacteria</taxon>
        <taxon>Bacillati</taxon>
        <taxon>Cyanobacteriota</taxon>
        <taxon>Cyanophyceae</taxon>
        <taxon>Synechococcales</taxon>
        <taxon>Synechococcaceae</taxon>
        <taxon>Synechococcus</taxon>
    </lineage>
</organism>
<accession>Q0I868</accession>
<gene>
    <name evidence="2" type="primary">gmk</name>
    <name type="ordered locus">sync_2153</name>
</gene>
<protein>
    <recommendedName>
        <fullName evidence="2">Guanylate kinase</fullName>
        <ecNumber evidence="2">2.7.4.8</ecNumber>
    </recommendedName>
    <alternativeName>
        <fullName evidence="2">GMP kinase</fullName>
    </alternativeName>
</protein>
<comment type="function">
    <text evidence="2">Essential for recycling GMP and indirectly, cGMP.</text>
</comment>
<comment type="function">
    <text evidence="1">(Microbial infection) Catalyzes the phosphorylation of dZMP to dZDP, when the bacterium is infected by a phage that produces the substrate for the synthesis of dZTP (2- amino-2'-deoxyadenosine 5'-triphosphate), which is then used by the phage as a DNA polymerase substrate.</text>
</comment>
<comment type="catalytic activity">
    <reaction evidence="2">
        <text>GMP + ATP = GDP + ADP</text>
        <dbReference type="Rhea" id="RHEA:20780"/>
        <dbReference type="ChEBI" id="CHEBI:30616"/>
        <dbReference type="ChEBI" id="CHEBI:58115"/>
        <dbReference type="ChEBI" id="CHEBI:58189"/>
        <dbReference type="ChEBI" id="CHEBI:456216"/>
        <dbReference type="EC" id="2.7.4.8"/>
    </reaction>
</comment>
<comment type="catalytic activity">
    <reaction evidence="1">
        <text>dZMP + ATP = dZDP + ADP</text>
        <dbReference type="Rhea" id="RHEA:67640"/>
        <dbReference type="ChEBI" id="CHEBI:30616"/>
        <dbReference type="ChEBI" id="CHEBI:172927"/>
        <dbReference type="ChEBI" id="CHEBI:172929"/>
        <dbReference type="ChEBI" id="CHEBI:456216"/>
    </reaction>
</comment>
<comment type="pathway">
    <text evidence="1">Purine metabolism.</text>
</comment>
<comment type="subcellular location">
    <subcellularLocation>
        <location evidence="2">Cytoplasm</location>
    </subcellularLocation>
</comment>
<comment type="similarity">
    <text evidence="2">Belongs to the guanylate kinase family.</text>
</comment>
<dbReference type="EC" id="2.7.4.8" evidence="2"/>
<dbReference type="EMBL" id="CP000435">
    <property type="protein sequence ID" value="ABI47312.1"/>
    <property type="molecule type" value="Genomic_DNA"/>
</dbReference>
<dbReference type="RefSeq" id="WP_011620066.1">
    <property type="nucleotide sequence ID" value="NC_008319.1"/>
</dbReference>
<dbReference type="SMR" id="Q0I868"/>
<dbReference type="STRING" id="64471.sync_2153"/>
<dbReference type="KEGG" id="syg:sync_2153"/>
<dbReference type="eggNOG" id="COG0194">
    <property type="taxonomic scope" value="Bacteria"/>
</dbReference>
<dbReference type="HOGENOM" id="CLU_001715_1_1_3"/>
<dbReference type="OrthoDB" id="9808150at2"/>
<dbReference type="Proteomes" id="UP000001961">
    <property type="component" value="Chromosome"/>
</dbReference>
<dbReference type="GO" id="GO:0005829">
    <property type="term" value="C:cytosol"/>
    <property type="evidence" value="ECO:0007669"/>
    <property type="project" value="TreeGrafter"/>
</dbReference>
<dbReference type="GO" id="GO:0005524">
    <property type="term" value="F:ATP binding"/>
    <property type="evidence" value="ECO:0007669"/>
    <property type="project" value="UniProtKB-UniRule"/>
</dbReference>
<dbReference type="GO" id="GO:0004385">
    <property type="term" value="F:guanylate kinase activity"/>
    <property type="evidence" value="ECO:0007669"/>
    <property type="project" value="UniProtKB-UniRule"/>
</dbReference>
<dbReference type="CDD" id="cd00071">
    <property type="entry name" value="GMPK"/>
    <property type="match status" value="1"/>
</dbReference>
<dbReference type="FunFam" id="3.30.63.10:FF:000002">
    <property type="entry name" value="Guanylate kinase 1"/>
    <property type="match status" value="1"/>
</dbReference>
<dbReference type="Gene3D" id="3.30.63.10">
    <property type="entry name" value="Guanylate Kinase phosphate binding domain"/>
    <property type="match status" value="1"/>
</dbReference>
<dbReference type="Gene3D" id="3.40.50.300">
    <property type="entry name" value="P-loop containing nucleotide triphosphate hydrolases"/>
    <property type="match status" value="1"/>
</dbReference>
<dbReference type="HAMAP" id="MF_00328">
    <property type="entry name" value="Guanylate_kinase"/>
    <property type="match status" value="1"/>
</dbReference>
<dbReference type="InterPro" id="IPR008145">
    <property type="entry name" value="GK/Ca_channel_bsu"/>
</dbReference>
<dbReference type="InterPro" id="IPR008144">
    <property type="entry name" value="Guanylate_kin-like_dom"/>
</dbReference>
<dbReference type="InterPro" id="IPR017665">
    <property type="entry name" value="Guanylate_kinase"/>
</dbReference>
<dbReference type="InterPro" id="IPR020590">
    <property type="entry name" value="Guanylate_kinase_CS"/>
</dbReference>
<dbReference type="InterPro" id="IPR027417">
    <property type="entry name" value="P-loop_NTPase"/>
</dbReference>
<dbReference type="NCBIfam" id="TIGR03263">
    <property type="entry name" value="guanyl_kin"/>
    <property type="match status" value="1"/>
</dbReference>
<dbReference type="PANTHER" id="PTHR23117:SF13">
    <property type="entry name" value="GUANYLATE KINASE"/>
    <property type="match status" value="1"/>
</dbReference>
<dbReference type="PANTHER" id="PTHR23117">
    <property type="entry name" value="GUANYLATE KINASE-RELATED"/>
    <property type="match status" value="1"/>
</dbReference>
<dbReference type="Pfam" id="PF00625">
    <property type="entry name" value="Guanylate_kin"/>
    <property type="match status" value="1"/>
</dbReference>
<dbReference type="SMART" id="SM00072">
    <property type="entry name" value="GuKc"/>
    <property type="match status" value="1"/>
</dbReference>
<dbReference type="SUPFAM" id="SSF52540">
    <property type="entry name" value="P-loop containing nucleoside triphosphate hydrolases"/>
    <property type="match status" value="1"/>
</dbReference>
<dbReference type="PROSITE" id="PS00856">
    <property type="entry name" value="GUANYLATE_KINASE_1"/>
    <property type="match status" value="1"/>
</dbReference>
<dbReference type="PROSITE" id="PS50052">
    <property type="entry name" value="GUANYLATE_KINASE_2"/>
    <property type="match status" value="1"/>
</dbReference>
<sequence length="190" mass="21070">MAPDGSIARPTVLTGPSGVGKGTLVARLRERHPEIWLSVSATTRAPRSGEIDGIHYFFHSKERFNKLVQSGGLLEWAEFAGNCYGTPREPVSERVANGIPVLLEIELEGARQVRKSLPEAIQIFLAPPSVEELEKRIRGRGTEAEEAIQRRLKRAQEELEAQTEFDAVIVNDDLETALAELEKQMNLTIS</sequence>